<sequence length="322" mass="38509">MYTTSKNNTNYSKNLYLSSNKTKQEIFRYLNSTGINLHTKFEIISNESDLNYIRDNEYIICPKYSGVRSWVIFFKNDNDVYYAVSFPKYGRFKKEEFSIFPIDVSVTKQLYYGTIMEGIYFKMDNKKCLIIDEVYQFAGEHMLLKTKRDRLEFLQEKFKTTVVMTPNYGLYVSAYFYPDKENIKELYNNIKNNMSIQEIIFYPNIYGKKVYSYMITETDLVDNIIKLAQLYLEKTASPDVYNLYRINSDKKIDIAYIPDIETSRKCKQWFKDSKEKKLLVRCKMDMNIKKWIPQEIIENNEILLESENESENESENESEYDE</sequence>
<proteinExistence type="predicted"/>
<organismHost>
    <name type="scientific">Acanthamoeba polyphaga</name>
    <name type="common">Amoeba</name>
    <dbReference type="NCBI Taxonomy" id="5757"/>
</organismHost>
<dbReference type="EMBL" id="AY653733">
    <property type="protein sequence ID" value="AAV50580.1"/>
    <property type="molecule type" value="Genomic_DNA"/>
</dbReference>
<dbReference type="SMR" id="Q5UPZ6"/>
<dbReference type="KEGG" id="vg:9924923"/>
<dbReference type="OrthoDB" id="30821at10239"/>
<dbReference type="Proteomes" id="UP000001134">
    <property type="component" value="Genome"/>
</dbReference>
<dbReference type="Gene3D" id="3.30.470.30">
    <property type="entry name" value="DNA ligase/mRNA capping enzyme"/>
    <property type="match status" value="1"/>
</dbReference>
<protein>
    <recommendedName>
        <fullName>Uncharacterized protein L308</fullName>
    </recommendedName>
</protein>
<accession>Q5UPZ6</accession>
<name>YL308_MIMIV</name>
<feature type="chain" id="PRO_0000244013" description="Uncharacterized protein L308">
    <location>
        <begin position="1"/>
        <end position="322"/>
    </location>
</feature>
<reference key="1">
    <citation type="journal article" date="2004" name="Science">
        <title>The 1.2-megabase genome sequence of Mimivirus.</title>
        <authorList>
            <person name="Raoult D."/>
            <person name="Audic S."/>
            <person name="Robert C."/>
            <person name="Abergel C."/>
            <person name="Renesto P."/>
            <person name="Ogata H."/>
            <person name="La Scola B."/>
            <person name="Susan M."/>
            <person name="Claverie J.-M."/>
        </authorList>
    </citation>
    <scope>NUCLEOTIDE SEQUENCE [LARGE SCALE GENOMIC DNA]</scope>
    <source>
        <strain>Rowbotham-Bradford</strain>
    </source>
</reference>
<keyword id="KW-1185">Reference proteome</keyword>
<gene>
    <name type="ordered locus">MIMI_L308</name>
</gene>
<organism>
    <name type="scientific">Acanthamoeba polyphaga mimivirus</name>
    <name type="common">APMV</name>
    <dbReference type="NCBI Taxonomy" id="212035"/>
    <lineage>
        <taxon>Viruses</taxon>
        <taxon>Varidnaviria</taxon>
        <taxon>Bamfordvirae</taxon>
        <taxon>Nucleocytoviricota</taxon>
        <taxon>Megaviricetes</taxon>
        <taxon>Imitervirales</taxon>
        <taxon>Mimiviridae</taxon>
        <taxon>Megamimivirinae</taxon>
        <taxon>Mimivirus</taxon>
        <taxon>Mimivirus bradfordmassiliense</taxon>
    </lineage>
</organism>